<dbReference type="EC" id="3.6.5.4" evidence="1"/>
<dbReference type="EMBL" id="CP001403">
    <property type="protein sequence ID" value="ACP45503.1"/>
    <property type="molecule type" value="Genomic_DNA"/>
</dbReference>
<dbReference type="RefSeq" id="WP_012716126.1">
    <property type="nucleotide sequence ID" value="NC_012622.1"/>
</dbReference>
<dbReference type="SMR" id="C3NDW4"/>
<dbReference type="GeneID" id="7806939"/>
<dbReference type="KEGG" id="siy:YG5714_1237"/>
<dbReference type="HOGENOM" id="CLU_009301_6_0_2"/>
<dbReference type="Proteomes" id="UP000002308">
    <property type="component" value="Chromosome"/>
</dbReference>
<dbReference type="GO" id="GO:0048500">
    <property type="term" value="C:signal recognition particle"/>
    <property type="evidence" value="ECO:0007669"/>
    <property type="project" value="UniProtKB-UniRule"/>
</dbReference>
<dbReference type="GO" id="GO:0008312">
    <property type="term" value="F:7S RNA binding"/>
    <property type="evidence" value="ECO:0007669"/>
    <property type="project" value="UniProtKB-UniRule"/>
</dbReference>
<dbReference type="GO" id="GO:0016887">
    <property type="term" value="F:ATP hydrolysis activity"/>
    <property type="evidence" value="ECO:0007669"/>
    <property type="project" value="InterPro"/>
</dbReference>
<dbReference type="GO" id="GO:0005525">
    <property type="term" value="F:GTP binding"/>
    <property type="evidence" value="ECO:0007669"/>
    <property type="project" value="UniProtKB-UniRule"/>
</dbReference>
<dbReference type="GO" id="GO:0003924">
    <property type="term" value="F:GTPase activity"/>
    <property type="evidence" value="ECO:0007669"/>
    <property type="project" value="UniProtKB-UniRule"/>
</dbReference>
<dbReference type="GO" id="GO:0006614">
    <property type="term" value="P:SRP-dependent cotranslational protein targeting to membrane"/>
    <property type="evidence" value="ECO:0007669"/>
    <property type="project" value="InterPro"/>
</dbReference>
<dbReference type="CDD" id="cd17875">
    <property type="entry name" value="SRP54_G"/>
    <property type="match status" value="1"/>
</dbReference>
<dbReference type="FunFam" id="3.40.50.300:FF:000022">
    <property type="entry name" value="Signal recognition particle 54 kDa subunit"/>
    <property type="match status" value="1"/>
</dbReference>
<dbReference type="Gene3D" id="3.40.50.300">
    <property type="entry name" value="P-loop containing nucleotide triphosphate hydrolases"/>
    <property type="match status" value="1"/>
</dbReference>
<dbReference type="Gene3D" id="1.20.120.140">
    <property type="entry name" value="Signal recognition particle SRP54, nucleotide-binding domain"/>
    <property type="match status" value="1"/>
</dbReference>
<dbReference type="Gene3D" id="1.10.260.30">
    <property type="entry name" value="Signal recognition particle, SRP54 subunit, M-domain"/>
    <property type="match status" value="1"/>
</dbReference>
<dbReference type="HAMAP" id="MF_00306">
    <property type="entry name" value="SRP54"/>
    <property type="match status" value="1"/>
</dbReference>
<dbReference type="InterPro" id="IPR003593">
    <property type="entry name" value="AAA+_ATPase"/>
</dbReference>
<dbReference type="InterPro" id="IPR027417">
    <property type="entry name" value="P-loop_NTPase"/>
</dbReference>
<dbReference type="InterPro" id="IPR036891">
    <property type="entry name" value="Signal_recog_part_SRP54_M_sf"/>
</dbReference>
<dbReference type="InterPro" id="IPR013822">
    <property type="entry name" value="Signal_recog_particl_SRP54_hlx"/>
</dbReference>
<dbReference type="InterPro" id="IPR004125">
    <property type="entry name" value="Signal_recog_particle_SRP54_M"/>
</dbReference>
<dbReference type="InterPro" id="IPR036225">
    <property type="entry name" value="SRP/SRP_N"/>
</dbReference>
<dbReference type="InterPro" id="IPR022941">
    <property type="entry name" value="SRP54"/>
</dbReference>
<dbReference type="InterPro" id="IPR000897">
    <property type="entry name" value="SRP54_GTPase_dom"/>
</dbReference>
<dbReference type="InterPro" id="IPR042101">
    <property type="entry name" value="SRP54_N_sf"/>
</dbReference>
<dbReference type="PANTHER" id="PTHR11564">
    <property type="entry name" value="SIGNAL RECOGNITION PARTICLE 54K PROTEIN SRP54"/>
    <property type="match status" value="1"/>
</dbReference>
<dbReference type="PANTHER" id="PTHR11564:SF5">
    <property type="entry name" value="SIGNAL RECOGNITION PARTICLE SUBUNIT SRP54"/>
    <property type="match status" value="1"/>
</dbReference>
<dbReference type="Pfam" id="PF00448">
    <property type="entry name" value="SRP54"/>
    <property type="match status" value="1"/>
</dbReference>
<dbReference type="Pfam" id="PF02881">
    <property type="entry name" value="SRP54_N"/>
    <property type="match status" value="1"/>
</dbReference>
<dbReference type="Pfam" id="PF02978">
    <property type="entry name" value="SRP_SPB"/>
    <property type="match status" value="1"/>
</dbReference>
<dbReference type="SMART" id="SM00382">
    <property type="entry name" value="AAA"/>
    <property type="match status" value="1"/>
</dbReference>
<dbReference type="SMART" id="SM00962">
    <property type="entry name" value="SRP54"/>
    <property type="match status" value="1"/>
</dbReference>
<dbReference type="SMART" id="SM00963">
    <property type="entry name" value="SRP54_N"/>
    <property type="match status" value="1"/>
</dbReference>
<dbReference type="SUPFAM" id="SSF47364">
    <property type="entry name" value="Domain of the SRP/SRP receptor G-proteins"/>
    <property type="match status" value="1"/>
</dbReference>
<dbReference type="SUPFAM" id="SSF52540">
    <property type="entry name" value="P-loop containing nucleoside triphosphate hydrolases"/>
    <property type="match status" value="1"/>
</dbReference>
<dbReference type="SUPFAM" id="SSF47446">
    <property type="entry name" value="Signal peptide-binding domain"/>
    <property type="match status" value="1"/>
</dbReference>
<comment type="function">
    <text evidence="1">Involved in targeting and insertion of nascent membrane proteins into the cytoplasmic membrane. Binds to the hydrophobic signal sequence of the ribosome-nascent chain (RNC) as it emerges from the ribosomes. The SRP-RNC complex is then targeted to the cytoplasmic membrane where it interacts with the SRP receptor FtsY.</text>
</comment>
<comment type="catalytic activity">
    <reaction evidence="1">
        <text>GTP + H2O = GDP + phosphate + H(+)</text>
        <dbReference type="Rhea" id="RHEA:19669"/>
        <dbReference type="ChEBI" id="CHEBI:15377"/>
        <dbReference type="ChEBI" id="CHEBI:15378"/>
        <dbReference type="ChEBI" id="CHEBI:37565"/>
        <dbReference type="ChEBI" id="CHEBI:43474"/>
        <dbReference type="ChEBI" id="CHEBI:58189"/>
        <dbReference type="EC" id="3.6.5.4"/>
    </reaction>
</comment>
<comment type="subunit">
    <text evidence="1">Part of the signal recognition particle protein translocation system, which is composed of SRP and FtsY. Archaeal SRP consists of a 7S RNA molecule of 300 nucleotides and two protein subunits: SRP54 and SRP19.</text>
</comment>
<comment type="subcellular location">
    <subcellularLocation>
        <location evidence="1">Cytoplasm</location>
    </subcellularLocation>
    <text evidence="1">The SRP-RNC complex is targeted to the cytoplasmic membrane.</text>
</comment>
<comment type="domain">
    <text evidence="1">Composed of three domains: the N-terminal N domain, which is responsible for interactions with the ribosome, the central G domain, which binds GTP, and the C-terminal M domain, which binds the RNA and the signal sequence of the RNC.</text>
</comment>
<comment type="similarity">
    <text evidence="1">Belongs to the GTP-binding SRP family. SRP54 subfamily.</text>
</comment>
<gene>
    <name evidence="1" type="primary">srp54</name>
    <name type="ordered locus">YG5714_1237</name>
</gene>
<feature type="chain" id="PRO_1000205016" description="Signal recognition particle 54 kDa protein">
    <location>
        <begin position="1"/>
        <end position="447"/>
    </location>
</feature>
<feature type="binding site" evidence="1">
    <location>
        <begin position="103"/>
        <end position="110"/>
    </location>
    <ligand>
        <name>GTP</name>
        <dbReference type="ChEBI" id="CHEBI:37565"/>
    </ligand>
</feature>
<feature type="binding site" evidence="1">
    <location>
        <begin position="185"/>
        <end position="189"/>
    </location>
    <ligand>
        <name>GTP</name>
        <dbReference type="ChEBI" id="CHEBI:37565"/>
    </ligand>
</feature>
<feature type="binding site" evidence="1">
    <location>
        <begin position="245"/>
        <end position="248"/>
    </location>
    <ligand>
        <name>GTP</name>
        <dbReference type="ChEBI" id="CHEBI:37565"/>
    </ligand>
</feature>
<sequence length="447" mass="49924">MLENIRDAVRKFLTGSTPYEKAVDEFIKELQKSLISSDVNVKLVFSLTAKIKERLNKEKPPSVLERKEWFISIVYDELSKLFGGDKEPNVNPTKLPFIIMLVGVQGSGKTTTAGKLAYFYKRRGYKVGLVAADVYRPAAYDQLLQLGNQIGVPVYGEPNNQNAIEIAKKGVDTFVKNKMDIIIVDTAGRHGYGEETKLLEEMKEIYEALKPDDVILVIDASIGQKAYDLASRFHQASPIGSIIITKMDGTAKGGGALSAVAATGATIKFIGTGEKIDELEIFNAKRYVSRILGMGDIESILEKVKGLEEYEKIQKKMEDVMEGKGKLTLRDVYAQIMALRKMGPLSKVLQHIPGLGVMLPTPSEDQLKLGEEKIRRWLAALNSMTYKELENPSIIDKSRMRRIAEGSGLEVEDVRELLEWYNNMNKLLKMVKRRRGSIDKLFGGKIG</sequence>
<evidence type="ECO:0000255" key="1">
    <source>
        <dbReference type="HAMAP-Rule" id="MF_00306"/>
    </source>
</evidence>
<name>SRP54_SACI7</name>
<organism>
    <name type="scientific">Saccharolobus islandicus (strain Y.G.57.14 / Yellowstone #1)</name>
    <name type="common">Sulfolobus islandicus</name>
    <dbReference type="NCBI Taxonomy" id="439386"/>
    <lineage>
        <taxon>Archaea</taxon>
        <taxon>Thermoproteota</taxon>
        <taxon>Thermoprotei</taxon>
        <taxon>Sulfolobales</taxon>
        <taxon>Sulfolobaceae</taxon>
        <taxon>Saccharolobus</taxon>
    </lineage>
</organism>
<proteinExistence type="inferred from homology"/>
<reference key="1">
    <citation type="journal article" date="2009" name="Proc. Natl. Acad. Sci. U.S.A.">
        <title>Biogeography of the Sulfolobus islandicus pan-genome.</title>
        <authorList>
            <person name="Reno M.L."/>
            <person name="Held N.L."/>
            <person name="Fields C.J."/>
            <person name="Burke P.V."/>
            <person name="Whitaker R.J."/>
        </authorList>
    </citation>
    <scope>NUCLEOTIDE SEQUENCE [LARGE SCALE GENOMIC DNA]</scope>
    <source>
        <strain>Y.G.57.14 / Yellowstone #1</strain>
    </source>
</reference>
<accession>C3NDW4</accession>
<keyword id="KW-0963">Cytoplasm</keyword>
<keyword id="KW-0342">GTP-binding</keyword>
<keyword id="KW-0378">Hydrolase</keyword>
<keyword id="KW-0547">Nucleotide-binding</keyword>
<keyword id="KW-0687">Ribonucleoprotein</keyword>
<keyword id="KW-0694">RNA-binding</keyword>
<keyword id="KW-0733">Signal recognition particle</keyword>
<protein>
    <recommendedName>
        <fullName evidence="1">Signal recognition particle 54 kDa protein</fullName>
        <shortName evidence="1">SRP54</shortName>
        <ecNumber evidence="1">3.6.5.4</ecNumber>
    </recommendedName>
</protein>